<protein>
    <recommendedName>
        <fullName evidence="4">Tonsoku-like protein</fullName>
    </recommendedName>
    <alternativeName>
        <fullName>Inhibitor of kappa B-related protein</fullName>
        <shortName>I-kappa-B-related protein</shortName>
        <shortName>IkappaBR</shortName>
    </alternativeName>
    <alternativeName>
        <fullName>NF-kappa-B inhibitor-like protein 2</fullName>
    </alternativeName>
    <alternativeName>
        <fullName>Nuclear factor of kappa light polypeptide gene enhancer in B-cells inhibitor-like 2</fullName>
    </alternativeName>
</protein>
<keyword id="KW-0040">ANK repeat</keyword>
<keyword id="KW-0156">Chromatin regulator</keyword>
<keyword id="KW-0158">Chromosome</keyword>
<keyword id="KW-0963">Cytoplasm</keyword>
<keyword id="KW-0227">DNA damage</keyword>
<keyword id="KW-0234">DNA repair</keyword>
<keyword id="KW-0433">Leucine-rich repeat</keyword>
<keyword id="KW-0488">Methylation</keyword>
<keyword id="KW-0539">Nucleus</keyword>
<keyword id="KW-0597">Phosphoprotein</keyword>
<keyword id="KW-1185">Reference proteome</keyword>
<keyword id="KW-0677">Repeat</keyword>
<keyword id="KW-0802">TPR repeat</keyword>
<accession>Q0P5G1</accession>
<name>TONSL_BOVIN</name>
<comment type="function">
    <text evidence="2">Component of the MMS22L-TONSL complex, a complex that promotes homologous recombination-mediated repair of double-strand breaks (DSBs) at stalled or collapsed replication forks. The MMS22L-TONSL complex is required to maintain genome integrity during DNA replication. It mediates the assembly of RAD51 filaments on single-stranded DNA (ssDNA): the MMS22L-TONSL complex is recruited to DSBs following histone replacement by histone chaperones and eviction of the replication protein A complex (RPA/RP-A) from DSBs. Following recruitment to DSBs, the TONSL-MMS22L complex promotes recruitment of RAD51 filaments and subsequent homologous recombination. Within the complex, TONSL acts as a histone reader, which recognizes and binds newly synthesized histones following their replacement by histone chaperones. Specifically binds histone H4 lacking methylation at 'Lys-20' (H4K20me0) and histone H3.1.</text>
</comment>
<comment type="subunit">
    <text evidence="2">Component of the MMS22L-TONSL complex, a complex at least composed of MMS22L and TONSL/NFKBIL2. Interacts with the MCM complex, the FACT complex and the RPA complex. Interacts with MCM5; the interaction is direct. Binds histones, with a strong preference for histone H3.1 (histones H3.1 and H3-4/H3.1t). Interacts (via ANK repeats) with histone H4; specifically binds histone H4 lacking methylation at 'Lys-20' (H4K20me0). May interact with DNAJC9; the interaction seems to be histone-dependent.</text>
</comment>
<comment type="subcellular location">
    <subcellularLocation>
        <location evidence="2">Nucleus</location>
    </subcellularLocation>
    <subcellularLocation>
        <location evidence="2">Chromosome</location>
    </subcellularLocation>
    <subcellularLocation>
        <location evidence="2">Cytoplasm</location>
    </subcellularLocation>
    <text evidence="2">Mainly nuclear. Localizes to DNA damage sites, accumulates at stressed replication forks. Recruited to stalled or collapsed replication forks following histone replacement by histone chaperones ASF1A and the CAF-1 complex: TONSL acts as a histone reader that recognizes and binds newly synthesized histones.</text>
</comment>
<comment type="domain">
    <text evidence="2">The ANK repeats mediate the interaction with the MCM complex and histones, while the LRR repeats mediate the interaction with MMS22L.</text>
</comment>
<comment type="similarity">
    <text evidence="4">Belongs to the Tonsoku family.</text>
</comment>
<organism>
    <name type="scientific">Bos taurus</name>
    <name type="common">Bovine</name>
    <dbReference type="NCBI Taxonomy" id="9913"/>
    <lineage>
        <taxon>Eukaryota</taxon>
        <taxon>Metazoa</taxon>
        <taxon>Chordata</taxon>
        <taxon>Craniata</taxon>
        <taxon>Vertebrata</taxon>
        <taxon>Euteleostomi</taxon>
        <taxon>Mammalia</taxon>
        <taxon>Eutheria</taxon>
        <taxon>Laurasiatheria</taxon>
        <taxon>Artiodactyla</taxon>
        <taxon>Ruminantia</taxon>
        <taxon>Pecora</taxon>
        <taxon>Bovidae</taxon>
        <taxon>Bovinae</taxon>
        <taxon>Bos</taxon>
    </lineage>
</organism>
<evidence type="ECO:0000250" key="1">
    <source>
        <dbReference type="UniProtKB" id="Q6NZL6"/>
    </source>
</evidence>
<evidence type="ECO:0000250" key="2">
    <source>
        <dbReference type="UniProtKB" id="Q96HA7"/>
    </source>
</evidence>
<evidence type="ECO:0000256" key="3">
    <source>
        <dbReference type="SAM" id="MobiDB-lite"/>
    </source>
</evidence>
<evidence type="ECO:0000305" key="4"/>
<dbReference type="EMBL" id="BC120084">
    <property type="protein sequence ID" value="AAI20085.1"/>
    <property type="molecule type" value="mRNA"/>
</dbReference>
<dbReference type="RefSeq" id="NP_001068656.1">
    <property type="nucleotide sequence ID" value="NM_001075188.1"/>
</dbReference>
<dbReference type="SMR" id="Q0P5G1"/>
<dbReference type="FunCoup" id="Q0P5G1">
    <property type="interactions" value="1415"/>
</dbReference>
<dbReference type="STRING" id="9913.ENSBTAP00000010191"/>
<dbReference type="PaxDb" id="9913-ENSBTAP00000010191"/>
<dbReference type="GeneID" id="505102"/>
<dbReference type="KEGG" id="bta:505102"/>
<dbReference type="CTD" id="4796"/>
<dbReference type="VEuPathDB" id="HostDB:ENSBTAG00000007749"/>
<dbReference type="eggNOG" id="KOG0504">
    <property type="taxonomic scope" value="Eukaryota"/>
</dbReference>
<dbReference type="eggNOG" id="KOG4308">
    <property type="taxonomic scope" value="Eukaryota"/>
</dbReference>
<dbReference type="HOGENOM" id="CLU_002128_0_0_1"/>
<dbReference type="InParanoid" id="Q0P5G1"/>
<dbReference type="OMA" id="ITQHLAK"/>
<dbReference type="OrthoDB" id="5806726at2759"/>
<dbReference type="TreeFam" id="TF326440"/>
<dbReference type="Proteomes" id="UP000009136">
    <property type="component" value="Chromosome 14"/>
</dbReference>
<dbReference type="Bgee" id="ENSBTAG00000007749">
    <property type="expression patterns" value="Expressed in nasopharynx and 106 other cell types or tissues"/>
</dbReference>
<dbReference type="GO" id="GO:0005737">
    <property type="term" value="C:cytoplasm"/>
    <property type="evidence" value="ECO:0007669"/>
    <property type="project" value="UniProtKB-SubCell"/>
</dbReference>
<dbReference type="GO" id="GO:0043596">
    <property type="term" value="C:nuclear replication fork"/>
    <property type="evidence" value="ECO:0000250"/>
    <property type="project" value="UniProtKB"/>
</dbReference>
<dbReference type="GO" id="GO:0035861">
    <property type="term" value="C:site of double-strand break"/>
    <property type="evidence" value="ECO:0000250"/>
    <property type="project" value="UniProtKB"/>
</dbReference>
<dbReference type="GO" id="GO:0042393">
    <property type="term" value="F:histone binding"/>
    <property type="evidence" value="ECO:0000250"/>
    <property type="project" value="UniProtKB"/>
</dbReference>
<dbReference type="GO" id="GO:0140566">
    <property type="term" value="F:histone reader activity"/>
    <property type="evidence" value="ECO:0000250"/>
    <property type="project" value="UniProtKB"/>
</dbReference>
<dbReference type="GO" id="GO:0000724">
    <property type="term" value="P:double-strand break repair via homologous recombination"/>
    <property type="evidence" value="ECO:0000250"/>
    <property type="project" value="UniProtKB"/>
</dbReference>
<dbReference type="GO" id="GO:0031297">
    <property type="term" value="P:replication fork processing"/>
    <property type="evidence" value="ECO:0000250"/>
    <property type="project" value="UniProtKB"/>
</dbReference>
<dbReference type="FunFam" id="1.25.40.20:FF:000151">
    <property type="entry name" value="Tonsoku like, DNA repair protein"/>
    <property type="match status" value="1"/>
</dbReference>
<dbReference type="FunFam" id="3.80.10.10:FF:000329">
    <property type="entry name" value="Tonsoku like, DNA repair protein"/>
    <property type="match status" value="1"/>
</dbReference>
<dbReference type="FunFam" id="3.80.10.10:FF:000509">
    <property type="entry name" value="Tonsoku like, DNA repair protein"/>
    <property type="match status" value="1"/>
</dbReference>
<dbReference type="FunFam" id="1.25.40.10:FF:001517">
    <property type="entry name" value="Tonsoku-like protein"/>
    <property type="match status" value="1"/>
</dbReference>
<dbReference type="FunFam" id="1.25.40.10:FF:000297">
    <property type="entry name" value="tonsoku-like protein isoform X2"/>
    <property type="match status" value="1"/>
</dbReference>
<dbReference type="Gene3D" id="1.25.40.20">
    <property type="entry name" value="Ankyrin repeat-containing domain"/>
    <property type="match status" value="1"/>
</dbReference>
<dbReference type="Gene3D" id="3.80.10.10">
    <property type="entry name" value="Ribonuclease Inhibitor"/>
    <property type="match status" value="3"/>
</dbReference>
<dbReference type="Gene3D" id="1.25.40.10">
    <property type="entry name" value="Tetratricopeptide repeat domain"/>
    <property type="match status" value="2"/>
</dbReference>
<dbReference type="InterPro" id="IPR002110">
    <property type="entry name" value="Ankyrin_rpt"/>
</dbReference>
<dbReference type="InterPro" id="IPR036770">
    <property type="entry name" value="Ankyrin_rpt-contain_sf"/>
</dbReference>
<dbReference type="InterPro" id="IPR001611">
    <property type="entry name" value="Leu-rich_rpt"/>
</dbReference>
<dbReference type="InterPro" id="IPR006553">
    <property type="entry name" value="Leu-rich_rpt_Cys-con_subtyp"/>
</dbReference>
<dbReference type="InterPro" id="IPR032675">
    <property type="entry name" value="LRR_dom_sf"/>
</dbReference>
<dbReference type="InterPro" id="IPR052311">
    <property type="entry name" value="MMS22L-TONSL_complex_comp"/>
</dbReference>
<dbReference type="InterPro" id="IPR011990">
    <property type="entry name" value="TPR-like_helical_dom_sf"/>
</dbReference>
<dbReference type="InterPro" id="IPR019734">
    <property type="entry name" value="TPR_rpt"/>
</dbReference>
<dbReference type="PANTHER" id="PTHR46358">
    <property type="entry name" value="TONSOKU-LIKE PROTEIN"/>
    <property type="match status" value="1"/>
</dbReference>
<dbReference type="PANTHER" id="PTHR46358:SF1">
    <property type="entry name" value="TONSOKU-LIKE PROTEIN"/>
    <property type="match status" value="1"/>
</dbReference>
<dbReference type="Pfam" id="PF12796">
    <property type="entry name" value="Ank_2"/>
    <property type="match status" value="1"/>
</dbReference>
<dbReference type="Pfam" id="PF13516">
    <property type="entry name" value="LRR_6"/>
    <property type="match status" value="3"/>
</dbReference>
<dbReference type="Pfam" id="PF13181">
    <property type="entry name" value="TPR_8"/>
    <property type="match status" value="1"/>
</dbReference>
<dbReference type="PRINTS" id="PR01415">
    <property type="entry name" value="ANKYRIN"/>
</dbReference>
<dbReference type="SMART" id="SM00248">
    <property type="entry name" value="ANK"/>
    <property type="match status" value="3"/>
</dbReference>
<dbReference type="SMART" id="SM00367">
    <property type="entry name" value="LRR_CC"/>
    <property type="match status" value="2"/>
</dbReference>
<dbReference type="SMART" id="SM00368">
    <property type="entry name" value="LRR_RI"/>
    <property type="match status" value="5"/>
</dbReference>
<dbReference type="SMART" id="SM00028">
    <property type="entry name" value="TPR"/>
    <property type="match status" value="6"/>
</dbReference>
<dbReference type="SUPFAM" id="SSF48403">
    <property type="entry name" value="Ankyrin repeat"/>
    <property type="match status" value="1"/>
</dbReference>
<dbReference type="SUPFAM" id="SSF52047">
    <property type="entry name" value="RNI-like"/>
    <property type="match status" value="1"/>
</dbReference>
<dbReference type="SUPFAM" id="SSF48452">
    <property type="entry name" value="TPR-like"/>
    <property type="match status" value="2"/>
</dbReference>
<dbReference type="PROSITE" id="PS50297">
    <property type="entry name" value="ANK_REP_REGION"/>
    <property type="match status" value="1"/>
</dbReference>
<dbReference type="PROSITE" id="PS50088">
    <property type="entry name" value="ANK_REPEAT"/>
    <property type="match status" value="3"/>
</dbReference>
<sequence>MSLERELRQLSKAKTKAQRSGQLREEASVCHQLGELLASHGCYAEALREHQQELQLLETTDDPLGCAVAHRKIGERLAEMEDYSAALQHQHRYLELACALSNHVEQQRAWATIGRTHLDIYDHHQSQDALQQAQDAFEKSLAILDEKLQGSLPKRELSEMRTRIYLNLGLTCESLQQVALCSAYFKKSIFLAEQNHLYEDLFRARYNLGAIHWRRGQHSQAMRCLEGARECARVLKQAFLESECCLLLSQVLLDLGDFLAAKRALKKAYRLGSQKPLQKASVCRTLKYVLAVVQLQQRLEESEESDPEVAMGICEQLGDLFSKAGDFPKAAAAYQKQLRFAELLSRPGPELAVIHVSLAATLGDMKDHRQAVHHYEAELKLQEGNPLEEAKTWLNIALSREEAGDAYEVLALCFQKALGCAQLAGQPQLQRQILQHLHAVQLRLQPQEAPSTETRLQELKAAGDEDEGDGEDEEDEEDDDALEATELELSESENEADASPPLEEDEELRGCLGRQRVNKWSRRNDVGETLLHRACIEGQLGRVQDLVRQGHPLNPRDYCGWTPLHEACNYGHLDIVRFLLDHGAAVDDPGGQGCDGITPLHDALNCGHFEVAELLIERGASVTLRTRKGHNPLETLQQWVKLYGKDLDSETQEKAAAMGRLLQAASLGRAPHSSQAPQTLPSNHLFDPETSPPSSPCPGTPEVCEASTRVSQGLAVSTVARPRRSRHKVASSSSSEGEDSAGPSQPTQKRPRHASPSLQTKAPMPGPASDREAATTSTSWAAYREAIRGVGSAQTCRLGPSPLRGPSEIPIPQAALIPQEECLAGDWLEEDFPMSPGHRGRCPARPQSSGDGGRHRASGPGSDTARRPRAQARQSRLPYLESWSTPVRADRANSQATEPARSPDVPRVVAPTGENPTTGHLPGQVLPPPIRVRVRVQDNLFLIPVPHREAHSVAWLAEQAAQRHYQASGLLPRLSLQKEGALLAPQDPIPDVLQSNEEVLAEVTSWDLPPLRDRYRRACQTLEQGEHQQVLQAVEHQGSAPTFSACSLALRQAQLTPLLRALKLHSALRELRLAGNRLGDGCVAELLATLDTVPGLTLLDLSSNHLGPEGLRQLAAGLLGQTTLQNLEELDLSMNPLGDGCGQALASILRACPVLCTLHLQACGFGPGFFLSHQVALGSAFQDTKCLKTLSLSYNGLGPTALGPVLGSLPAHSLLRLELSSVVTGKSDVGLTDPVVHYLSQEGCVLEHLSLSANHLGDKDVRALSRCLPLCPSLVSLDLSANPEVSSAGLEELLSTLQKRPQGLSFLGLSGCAVQGPLGLDLWDKVVAQLQELQLCTRRLSAEDRNALHQLLPSQLGPKVCTLDQGPKLFFRHL</sequence>
<reference key="1">
    <citation type="submission" date="2006-08" db="EMBL/GenBank/DDBJ databases">
        <authorList>
            <consortium name="NIH - Mammalian Gene Collection (MGC) project"/>
        </authorList>
    </citation>
    <scope>NUCLEOTIDE SEQUENCE [LARGE SCALE MRNA]</scope>
    <source>
        <strain>Hereford</strain>
        <tissue>Fetal cerebellum</tissue>
    </source>
</reference>
<feature type="chain" id="PRO_0000326633" description="Tonsoku-like protein">
    <location>
        <begin position="1"/>
        <end position="1374"/>
    </location>
</feature>
<feature type="repeat" description="TPR 1">
    <location>
        <begin position="27"/>
        <end position="60"/>
    </location>
</feature>
<feature type="repeat" description="TPR 2">
    <location>
        <begin position="67"/>
        <end position="100"/>
    </location>
</feature>
<feature type="repeat" description="TPR 3">
    <location>
        <begin position="107"/>
        <end position="140"/>
    </location>
</feature>
<feature type="repeat" description="TPR 4">
    <location>
        <begin position="162"/>
        <end position="195"/>
    </location>
</feature>
<feature type="repeat" description="TPR 5">
    <location>
        <begin position="202"/>
        <end position="235"/>
    </location>
</feature>
<feature type="repeat" description="TPR 6">
    <location>
        <begin position="242"/>
        <end position="275"/>
    </location>
</feature>
<feature type="repeat" description="TPR 7">
    <location>
        <begin position="311"/>
        <end position="344"/>
    </location>
</feature>
<feature type="repeat" description="TPR 8">
    <location>
        <begin position="352"/>
        <end position="385"/>
    </location>
</feature>
<feature type="repeat" description="ANK 1">
    <location>
        <begin position="526"/>
        <end position="558"/>
    </location>
</feature>
<feature type="repeat" description="ANK 2">
    <location>
        <begin position="559"/>
        <end position="591"/>
    </location>
</feature>
<feature type="repeat" description="ANK 3">
    <location>
        <begin position="595"/>
        <end position="627"/>
    </location>
</feature>
<feature type="repeat" description="LRR 1">
    <location>
        <begin position="1065"/>
        <end position="1089"/>
    </location>
</feature>
<feature type="repeat" description="LRR 2">
    <location>
        <begin position="1093"/>
        <end position="1121"/>
    </location>
</feature>
<feature type="repeat" description="LRR 3">
    <location>
        <begin position="1124"/>
        <end position="1147"/>
    </location>
</feature>
<feature type="repeat" description="LRR 4">
    <location>
        <begin position="1184"/>
        <end position="1207"/>
    </location>
</feature>
<feature type="repeat" description="LRR 5">
    <location>
        <begin position="1243"/>
        <end position="1266"/>
    </location>
</feature>
<feature type="repeat" description="LRR 6">
    <location>
        <begin position="1271"/>
        <end position="1296"/>
    </location>
</feature>
<feature type="repeat" description="LRR 7">
    <location>
        <begin position="1327"/>
        <end position="1350"/>
    </location>
</feature>
<feature type="region of interest" description="Disordered" evidence="3">
    <location>
        <begin position="460"/>
        <end position="508"/>
    </location>
</feature>
<feature type="region of interest" description="Disordered" evidence="3">
    <location>
        <begin position="668"/>
        <end position="777"/>
    </location>
</feature>
<feature type="region of interest" description="Disordered" evidence="3">
    <location>
        <begin position="829"/>
        <end position="908"/>
    </location>
</feature>
<feature type="compositionally biased region" description="Acidic residues" evidence="3">
    <location>
        <begin position="464"/>
        <end position="507"/>
    </location>
</feature>
<feature type="compositionally biased region" description="Polar residues" evidence="3">
    <location>
        <begin position="672"/>
        <end position="682"/>
    </location>
</feature>
<feature type="compositionally biased region" description="Pro residues" evidence="3">
    <location>
        <begin position="690"/>
        <end position="699"/>
    </location>
</feature>
<feature type="compositionally biased region" description="Low complexity" evidence="3">
    <location>
        <begin position="731"/>
        <end position="744"/>
    </location>
</feature>
<feature type="modified residue" description="Phosphoserine" evidence="2">
    <location>
        <position position="711"/>
    </location>
</feature>
<feature type="modified residue" description="Omega-N-methylarginine" evidence="1">
    <location>
        <position position="788"/>
    </location>
</feature>
<proteinExistence type="evidence at transcript level"/>
<gene>
    <name type="primary">TONSL</name>
    <name type="synonym">IKBR</name>
    <name type="synonym">NFKBIL2</name>
</gene>